<proteinExistence type="inferred from homology"/>
<name>TOTA2_DROSI</name>
<reference evidence="5" key="1">
    <citation type="journal article" date="2007" name="Nature">
        <title>Evolution of genes and genomes on the Drosophila phylogeny.</title>
        <authorList>
            <consortium name="Drosophila 12 genomes consortium"/>
        </authorList>
    </citation>
    <scope>NUCLEOTIDE SEQUENCE [LARGE SCALE GENOMIC DNA]</scope>
</reference>
<sequence length="129" mass="14207">MNSSTSLMCFALLLISPLCMGYSDEDREADSRRIAEIIQNAQDDDAKINSTQELLDIYRRLYPSLSLEDRENIDKFVNEHTDAIVIDGVPIQGGRKAKIIGKIVSPAAKGLAVGFFEELGSKIAQLFTG</sequence>
<dbReference type="EMBL" id="CM000364">
    <property type="protein sequence ID" value="EDX12164.1"/>
    <property type="molecule type" value="Genomic_DNA"/>
</dbReference>
<dbReference type="SMR" id="B4R1Q5"/>
<dbReference type="STRING" id="7240.B4R1Q5"/>
<dbReference type="GlyCosmos" id="B4R1Q5">
    <property type="glycosylation" value="1 site, No reported glycans"/>
</dbReference>
<dbReference type="EnsemblMetazoa" id="FBtr0219291">
    <property type="protein sequence ID" value="FBpp0217783"/>
    <property type="gene ID" value="FBgn0190882"/>
</dbReference>
<dbReference type="EnsemblMetazoa" id="XM_002102625.4">
    <property type="protein sequence ID" value="XP_002102661.1"/>
    <property type="gene ID" value="LOC6727272"/>
</dbReference>
<dbReference type="GeneID" id="6727272"/>
<dbReference type="KEGG" id="dsi:Dsimw501_GD19381"/>
<dbReference type="HOGENOM" id="CLU_152780_0_0_1"/>
<dbReference type="OrthoDB" id="7861285at2759"/>
<dbReference type="PhylomeDB" id="B4R1Q5"/>
<dbReference type="Proteomes" id="UP000000304">
    <property type="component" value="Chromosome 3R"/>
</dbReference>
<dbReference type="Bgee" id="FBgn0190882">
    <property type="expression patterns" value="Expressed in adult organism and 2 other cell types or tissues"/>
</dbReference>
<dbReference type="GO" id="GO:0005615">
    <property type="term" value="C:extracellular space"/>
    <property type="evidence" value="ECO:0000250"/>
    <property type="project" value="UniProtKB"/>
</dbReference>
<dbReference type="GO" id="GO:0034605">
    <property type="term" value="P:cellular response to heat"/>
    <property type="evidence" value="ECO:0007669"/>
    <property type="project" value="UniProtKB-ARBA"/>
</dbReference>
<dbReference type="GO" id="GO:0042742">
    <property type="term" value="P:defense response to bacterium"/>
    <property type="evidence" value="ECO:0007669"/>
    <property type="project" value="UniProtKB-KW"/>
</dbReference>
<dbReference type="GO" id="GO:0045087">
    <property type="term" value="P:innate immune response"/>
    <property type="evidence" value="ECO:0007669"/>
    <property type="project" value="UniProtKB-KW"/>
</dbReference>
<dbReference type="GO" id="GO:0009617">
    <property type="term" value="P:response to bacterium"/>
    <property type="evidence" value="ECO:0000250"/>
    <property type="project" value="UniProtKB"/>
</dbReference>
<dbReference type="GO" id="GO:0009409">
    <property type="term" value="P:response to cold"/>
    <property type="evidence" value="ECO:0000250"/>
    <property type="project" value="UniProtKB"/>
</dbReference>
<dbReference type="GO" id="GO:0009408">
    <property type="term" value="P:response to heat"/>
    <property type="evidence" value="ECO:0000250"/>
    <property type="project" value="UniProtKB"/>
</dbReference>
<dbReference type="GO" id="GO:0009612">
    <property type="term" value="P:response to mechanical stimulus"/>
    <property type="evidence" value="ECO:0000250"/>
    <property type="project" value="UniProtKB"/>
</dbReference>
<dbReference type="GO" id="GO:0006979">
    <property type="term" value="P:response to oxidative stress"/>
    <property type="evidence" value="ECO:0000250"/>
    <property type="project" value="UniProtKB"/>
</dbReference>
<dbReference type="GO" id="GO:0009411">
    <property type="term" value="P:response to UV"/>
    <property type="evidence" value="ECO:0000250"/>
    <property type="project" value="UniProtKB"/>
</dbReference>
<dbReference type="GO" id="GO:0009414">
    <property type="term" value="P:response to water deprivation"/>
    <property type="evidence" value="ECO:0000250"/>
    <property type="project" value="UniProtKB"/>
</dbReference>
<dbReference type="InterPro" id="IPR010825">
    <property type="entry name" value="Turandot"/>
</dbReference>
<dbReference type="Pfam" id="PF07240">
    <property type="entry name" value="Turandot"/>
    <property type="match status" value="1"/>
</dbReference>
<feature type="signal peptide" evidence="3">
    <location>
        <begin position="1"/>
        <end position="21"/>
    </location>
</feature>
<feature type="chain" id="PRO_0000355140" description="Protein Turandot A2">
    <location>
        <begin position="22"/>
        <end position="129"/>
    </location>
</feature>
<feature type="glycosylation site" description="N-linked (GlcNAc...) asparagine" evidence="3">
    <location>
        <position position="49"/>
    </location>
</feature>
<organism>
    <name type="scientific">Drosophila simulans</name>
    <name type="common">Fruit fly</name>
    <dbReference type="NCBI Taxonomy" id="7240"/>
    <lineage>
        <taxon>Eukaryota</taxon>
        <taxon>Metazoa</taxon>
        <taxon>Ecdysozoa</taxon>
        <taxon>Arthropoda</taxon>
        <taxon>Hexapoda</taxon>
        <taxon>Insecta</taxon>
        <taxon>Pterygota</taxon>
        <taxon>Neoptera</taxon>
        <taxon>Endopterygota</taxon>
        <taxon>Diptera</taxon>
        <taxon>Brachycera</taxon>
        <taxon>Muscomorpha</taxon>
        <taxon>Ephydroidea</taxon>
        <taxon>Drosophilidae</taxon>
        <taxon>Drosophila</taxon>
        <taxon>Sophophora</taxon>
    </lineage>
</organism>
<keyword id="KW-0044">Antibiotic</keyword>
<keyword id="KW-0929">Antimicrobial</keyword>
<keyword id="KW-0325">Glycoprotein</keyword>
<keyword id="KW-0391">Immunity</keyword>
<keyword id="KW-0399">Innate immunity</keyword>
<keyword id="KW-1185">Reference proteome</keyword>
<keyword id="KW-0964">Secreted</keyword>
<keyword id="KW-0732">Signal</keyword>
<gene>
    <name type="primary">TotA2</name>
    <name type="ORF">GD19381</name>
</gene>
<evidence type="ECO:0000250" key="1"/>
<evidence type="ECO:0000250" key="2">
    <source>
        <dbReference type="UniProtKB" id="Q8IN44"/>
    </source>
</evidence>
<evidence type="ECO:0000255" key="3"/>
<evidence type="ECO:0000305" key="4"/>
<evidence type="ECO:0000312" key="5">
    <source>
        <dbReference type="EMBL" id="EDX12164.1"/>
    </source>
</evidence>
<comment type="function">
    <text evidence="2">A humoral factor that plays a role in stress tolerance; gives increased resistance to the lethal effects of bacterial challenge and stress. Regulated by the JAK/STAT pathway and NF-KB-like Relish pathway in the fat body, upd3 in the hemocytes and Mekk1 in response to septic injury and consequent immune response (By similarity).</text>
</comment>
<comment type="subcellular location">
    <subcellularLocation>
        <location evidence="2">Secreted</location>
    </subcellularLocation>
    <text evidence="1">Secreted from the fat body into the hemolymph.</text>
</comment>
<comment type="similarity">
    <text evidence="4">Belongs to the Turandot family.</text>
</comment>
<protein>
    <recommendedName>
        <fullName>Protein Turandot A2</fullName>
    </recommendedName>
</protein>
<accession>B4R1Q5</accession>